<dbReference type="EC" id="4.2.1.33" evidence="1"/>
<dbReference type="EMBL" id="CP000509">
    <property type="protein sequence ID" value="ABL82799.1"/>
    <property type="molecule type" value="Genomic_DNA"/>
</dbReference>
<dbReference type="RefSeq" id="WP_011756733.1">
    <property type="nucleotide sequence ID" value="NC_008699.1"/>
</dbReference>
<dbReference type="SMR" id="A1SLW4"/>
<dbReference type="STRING" id="196162.Noca_3297"/>
<dbReference type="KEGG" id="nca:Noca_3297"/>
<dbReference type="eggNOG" id="COG0066">
    <property type="taxonomic scope" value="Bacteria"/>
</dbReference>
<dbReference type="HOGENOM" id="CLU_081378_0_1_11"/>
<dbReference type="OrthoDB" id="9777465at2"/>
<dbReference type="UniPathway" id="UPA00048">
    <property type="reaction ID" value="UER00071"/>
</dbReference>
<dbReference type="Proteomes" id="UP000000640">
    <property type="component" value="Chromosome"/>
</dbReference>
<dbReference type="GO" id="GO:0009316">
    <property type="term" value="C:3-isopropylmalate dehydratase complex"/>
    <property type="evidence" value="ECO:0007669"/>
    <property type="project" value="InterPro"/>
</dbReference>
<dbReference type="GO" id="GO:0003861">
    <property type="term" value="F:3-isopropylmalate dehydratase activity"/>
    <property type="evidence" value="ECO:0007669"/>
    <property type="project" value="UniProtKB-UniRule"/>
</dbReference>
<dbReference type="GO" id="GO:0009098">
    <property type="term" value="P:L-leucine biosynthetic process"/>
    <property type="evidence" value="ECO:0007669"/>
    <property type="project" value="UniProtKB-UniRule"/>
</dbReference>
<dbReference type="CDD" id="cd01577">
    <property type="entry name" value="IPMI_Swivel"/>
    <property type="match status" value="1"/>
</dbReference>
<dbReference type="FunFam" id="3.20.19.10:FF:000003">
    <property type="entry name" value="3-isopropylmalate dehydratase small subunit"/>
    <property type="match status" value="1"/>
</dbReference>
<dbReference type="Gene3D" id="3.20.19.10">
    <property type="entry name" value="Aconitase, domain 4"/>
    <property type="match status" value="1"/>
</dbReference>
<dbReference type="HAMAP" id="MF_01031">
    <property type="entry name" value="LeuD_type1"/>
    <property type="match status" value="1"/>
</dbReference>
<dbReference type="InterPro" id="IPR004431">
    <property type="entry name" value="3-IsopropMal_deHydase_ssu"/>
</dbReference>
<dbReference type="InterPro" id="IPR015928">
    <property type="entry name" value="Aconitase/3IPM_dehydase_swvl"/>
</dbReference>
<dbReference type="InterPro" id="IPR000573">
    <property type="entry name" value="AconitaseA/IPMdHydase_ssu_swvl"/>
</dbReference>
<dbReference type="InterPro" id="IPR033940">
    <property type="entry name" value="IPMI_Swivel"/>
</dbReference>
<dbReference type="InterPro" id="IPR050075">
    <property type="entry name" value="LeuD"/>
</dbReference>
<dbReference type="NCBIfam" id="TIGR00171">
    <property type="entry name" value="leuD"/>
    <property type="match status" value="1"/>
</dbReference>
<dbReference type="NCBIfam" id="NF002458">
    <property type="entry name" value="PRK01641.1"/>
    <property type="match status" value="1"/>
</dbReference>
<dbReference type="PANTHER" id="PTHR43345:SF5">
    <property type="entry name" value="3-ISOPROPYLMALATE DEHYDRATASE SMALL SUBUNIT"/>
    <property type="match status" value="1"/>
</dbReference>
<dbReference type="PANTHER" id="PTHR43345">
    <property type="entry name" value="3-ISOPROPYLMALATE DEHYDRATASE SMALL SUBUNIT 2-RELATED-RELATED"/>
    <property type="match status" value="1"/>
</dbReference>
<dbReference type="Pfam" id="PF00694">
    <property type="entry name" value="Aconitase_C"/>
    <property type="match status" value="1"/>
</dbReference>
<dbReference type="SUPFAM" id="SSF52016">
    <property type="entry name" value="LeuD/IlvD-like"/>
    <property type="match status" value="1"/>
</dbReference>
<keyword id="KW-0028">Amino-acid biosynthesis</keyword>
<keyword id="KW-0100">Branched-chain amino acid biosynthesis</keyword>
<keyword id="KW-0432">Leucine biosynthesis</keyword>
<keyword id="KW-0456">Lyase</keyword>
<keyword id="KW-1185">Reference proteome</keyword>
<name>LEUD_NOCSJ</name>
<proteinExistence type="inferred from homology"/>
<sequence length="202" mass="22057">MDKFTTHTGVGIPLRRSNVDTDQIIPAVYLKRVTRTGFEDGLFAAWRNDPSFVLNNEGYAGASVLVAGPDFGTGSSREHAVWALQNYGFKVVISPRFADIFRGNSGKAGLLAAQVDESVVQKIWDLLDEHPGTAVTVDLESRTVRAGEGVDAIEASFDIDDYTRWRLLEGLDDIGITLGHADAIASYEATRPSWRPATIHAH</sequence>
<accession>A1SLW4</accession>
<protein>
    <recommendedName>
        <fullName evidence="1">3-isopropylmalate dehydratase small subunit</fullName>
        <ecNumber evidence="1">4.2.1.33</ecNumber>
    </recommendedName>
    <alternativeName>
        <fullName evidence="1">Alpha-IPM isomerase</fullName>
        <shortName evidence="1">IPMI</shortName>
    </alternativeName>
    <alternativeName>
        <fullName evidence="1">Isopropylmalate isomerase</fullName>
    </alternativeName>
</protein>
<evidence type="ECO:0000255" key="1">
    <source>
        <dbReference type="HAMAP-Rule" id="MF_01031"/>
    </source>
</evidence>
<gene>
    <name evidence="1" type="primary">leuD</name>
    <name type="ordered locus">Noca_3297</name>
</gene>
<feature type="chain" id="PRO_1000063798" description="3-isopropylmalate dehydratase small subunit">
    <location>
        <begin position="1"/>
        <end position="202"/>
    </location>
</feature>
<comment type="function">
    <text evidence="1">Catalyzes the isomerization between 2-isopropylmalate and 3-isopropylmalate, via the formation of 2-isopropylmaleate.</text>
</comment>
<comment type="catalytic activity">
    <reaction evidence="1">
        <text>(2R,3S)-3-isopropylmalate = (2S)-2-isopropylmalate</text>
        <dbReference type="Rhea" id="RHEA:32287"/>
        <dbReference type="ChEBI" id="CHEBI:1178"/>
        <dbReference type="ChEBI" id="CHEBI:35121"/>
        <dbReference type="EC" id="4.2.1.33"/>
    </reaction>
</comment>
<comment type="pathway">
    <text evidence="1">Amino-acid biosynthesis; L-leucine biosynthesis; L-leucine from 3-methyl-2-oxobutanoate: step 2/4.</text>
</comment>
<comment type="subunit">
    <text evidence="1">Heterodimer of LeuC and LeuD.</text>
</comment>
<comment type="similarity">
    <text evidence="1">Belongs to the LeuD family. LeuD type 1 subfamily.</text>
</comment>
<organism>
    <name type="scientific">Nocardioides sp. (strain ATCC BAA-499 / JS614)</name>
    <dbReference type="NCBI Taxonomy" id="196162"/>
    <lineage>
        <taxon>Bacteria</taxon>
        <taxon>Bacillati</taxon>
        <taxon>Actinomycetota</taxon>
        <taxon>Actinomycetes</taxon>
        <taxon>Propionibacteriales</taxon>
        <taxon>Nocardioidaceae</taxon>
        <taxon>Nocardioides</taxon>
    </lineage>
</organism>
<reference key="1">
    <citation type="submission" date="2006-12" db="EMBL/GenBank/DDBJ databases">
        <title>Complete sequence of chromosome 1 of Nocardioides sp. JS614.</title>
        <authorList>
            <person name="Copeland A."/>
            <person name="Lucas S."/>
            <person name="Lapidus A."/>
            <person name="Barry K."/>
            <person name="Detter J.C."/>
            <person name="Glavina del Rio T."/>
            <person name="Hammon N."/>
            <person name="Israni S."/>
            <person name="Dalin E."/>
            <person name="Tice H."/>
            <person name="Pitluck S."/>
            <person name="Thompson L.S."/>
            <person name="Brettin T."/>
            <person name="Bruce D."/>
            <person name="Han C."/>
            <person name="Tapia R."/>
            <person name="Schmutz J."/>
            <person name="Larimer F."/>
            <person name="Land M."/>
            <person name="Hauser L."/>
            <person name="Kyrpides N."/>
            <person name="Kim E."/>
            <person name="Mattes T."/>
            <person name="Gossett J."/>
            <person name="Richardson P."/>
        </authorList>
    </citation>
    <scope>NUCLEOTIDE SEQUENCE [LARGE SCALE GENOMIC DNA]</scope>
    <source>
        <strain>ATCC BAA-499 / JS614</strain>
    </source>
</reference>